<sequence length="368" mass="40242">MSLLVFLCQIIVLSVLFFSEVCLAGKKIPANFVFGDSLVDAGNNNYLATLSKANYVPNGIDFGSPTGRFTNGRTIVDIVYQALGSDELTPPYLAPTTSGSLILNGVNYASGGSGILNSTGKLFGERINVDAQLDNFATTRQDIISWIGESEAAKLFRSAIFSVTTGSNDLINNYFTPVISTLQRKVVAPEVFVDTMISKFRLQLTRLYQLGARKIVVINIGPIGCIPFERESDPAAGNNCLAEPNEVAQMYNLKLKTLVEELNKNLQGSRFVYGDVFRIVDDIIQNYSSYGFESEKIPCCSLVGKVGGLIPCGPPSKVCMDRSKYVFWDPYHPTEAANIIIARRLLSGDTSDIYPINIRQLANLKINA</sequence>
<keyword id="KW-0325">Glycoprotein</keyword>
<keyword id="KW-0378">Hydrolase</keyword>
<keyword id="KW-0442">Lipid degradation</keyword>
<keyword id="KW-0443">Lipid metabolism</keyword>
<keyword id="KW-1185">Reference proteome</keyword>
<keyword id="KW-0964">Secreted</keyword>
<keyword id="KW-0732">Signal</keyword>
<organism>
    <name type="scientific">Arabidopsis thaliana</name>
    <name type="common">Mouse-ear cress</name>
    <dbReference type="NCBI Taxonomy" id="3702"/>
    <lineage>
        <taxon>Eukaryota</taxon>
        <taxon>Viridiplantae</taxon>
        <taxon>Streptophyta</taxon>
        <taxon>Embryophyta</taxon>
        <taxon>Tracheophyta</taxon>
        <taxon>Spermatophyta</taxon>
        <taxon>Magnoliopsida</taxon>
        <taxon>eudicotyledons</taxon>
        <taxon>Gunneridae</taxon>
        <taxon>Pentapetalae</taxon>
        <taxon>rosids</taxon>
        <taxon>malvids</taxon>
        <taxon>Brassicales</taxon>
        <taxon>Brassicaceae</taxon>
        <taxon>Camelineae</taxon>
        <taxon>Arabidopsis</taxon>
    </lineage>
</organism>
<name>GDL64_ARATH</name>
<reference key="1">
    <citation type="journal article" date="1998" name="Nature">
        <title>Analysis of 1.9 Mb of contiguous sequence from chromosome 4 of Arabidopsis thaliana.</title>
        <authorList>
            <person name="Bevan M."/>
            <person name="Bancroft I."/>
            <person name="Bent E."/>
            <person name="Love K."/>
            <person name="Goodman H.M."/>
            <person name="Dean C."/>
            <person name="Bergkamp R."/>
            <person name="Dirkse W."/>
            <person name="van Staveren M."/>
            <person name="Stiekema W."/>
            <person name="Drost L."/>
            <person name="Ridley P."/>
            <person name="Hudson S.-A."/>
            <person name="Patel K."/>
            <person name="Murphy G."/>
            <person name="Piffanelli P."/>
            <person name="Wedler H."/>
            <person name="Wedler E."/>
            <person name="Wambutt R."/>
            <person name="Weitzenegger T."/>
            <person name="Pohl T."/>
            <person name="Terryn N."/>
            <person name="Gielen J."/>
            <person name="Villarroel R."/>
            <person name="De Clercq R."/>
            <person name="van Montagu M."/>
            <person name="Lecharny A."/>
            <person name="Aubourg S."/>
            <person name="Gy I."/>
            <person name="Kreis M."/>
            <person name="Lao N."/>
            <person name="Kavanagh T."/>
            <person name="Hempel S."/>
            <person name="Kotter P."/>
            <person name="Entian K.-D."/>
            <person name="Rieger M."/>
            <person name="Schaefer M."/>
            <person name="Funk B."/>
            <person name="Mueller-Auer S."/>
            <person name="Silvey M."/>
            <person name="James R."/>
            <person name="Monfort A."/>
            <person name="Pons A."/>
            <person name="Puigdomenech P."/>
            <person name="Douka A."/>
            <person name="Voukelatou E."/>
            <person name="Milioni D."/>
            <person name="Hatzopoulos P."/>
            <person name="Piravandi E."/>
            <person name="Obermaier B."/>
            <person name="Hilbert H."/>
            <person name="Duesterhoeft A."/>
            <person name="Moores T."/>
            <person name="Jones J.D.G."/>
            <person name="Eneva T."/>
            <person name="Palme K."/>
            <person name="Benes V."/>
            <person name="Rechmann S."/>
            <person name="Ansorge W."/>
            <person name="Cooke R."/>
            <person name="Berger C."/>
            <person name="Delseny M."/>
            <person name="Voet M."/>
            <person name="Volckaert G."/>
            <person name="Mewes H.-W."/>
            <person name="Klosterman S."/>
            <person name="Schueller C."/>
            <person name="Chalwatzis N."/>
        </authorList>
    </citation>
    <scope>NUCLEOTIDE SEQUENCE [LARGE SCALE GENOMIC DNA]</scope>
    <source>
        <strain>cv. Columbia</strain>
    </source>
</reference>
<reference key="2">
    <citation type="journal article" date="1999" name="Nature">
        <title>Sequence and analysis of chromosome 4 of the plant Arabidopsis thaliana.</title>
        <authorList>
            <person name="Mayer K.F.X."/>
            <person name="Schueller C."/>
            <person name="Wambutt R."/>
            <person name="Murphy G."/>
            <person name="Volckaert G."/>
            <person name="Pohl T."/>
            <person name="Duesterhoeft A."/>
            <person name="Stiekema W."/>
            <person name="Entian K.-D."/>
            <person name="Terryn N."/>
            <person name="Harris B."/>
            <person name="Ansorge W."/>
            <person name="Brandt P."/>
            <person name="Grivell L.A."/>
            <person name="Rieger M."/>
            <person name="Weichselgartner M."/>
            <person name="de Simone V."/>
            <person name="Obermaier B."/>
            <person name="Mache R."/>
            <person name="Mueller M."/>
            <person name="Kreis M."/>
            <person name="Delseny M."/>
            <person name="Puigdomenech P."/>
            <person name="Watson M."/>
            <person name="Schmidtheini T."/>
            <person name="Reichert B."/>
            <person name="Portetelle D."/>
            <person name="Perez-Alonso M."/>
            <person name="Boutry M."/>
            <person name="Bancroft I."/>
            <person name="Vos P."/>
            <person name="Hoheisel J."/>
            <person name="Zimmermann W."/>
            <person name="Wedler H."/>
            <person name="Ridley P."/>
            <person name="Langham S.-A."/>
            <person name="McCullagh B."/>
            <person name="Bilham L."/>
            <person name="Robben J."/>
            <person name="van der Schueren J."/>
            <person name="Grymonprez B."/>
            <person name="Chuang Y.-J."/>
            <person name="Vandenbussche F."/>
            <person name="Braeken M."/>
            <person name="Weltjens I."/>
            <person name="Voet M."/>
            <person name="Bastiaens I."/>
            <person name="Aert R."/>
            <person name="Defoor E."/>
            <person name="Weitzenegger T."/>
            <person name="Bothe G."/>
            <person name="Ramsperger U."/>
            <person name="Hilbert H."/>
            <person name="Braun M."/>
            <person name="Holzer E."/>
            <person name="Brandt A."/>
            <person name="Peters S."/>
            <person name="van Staveren M."/>
            <person name="Dirkse W."/>
            <person name="Mooijman P."/>
            <person name="Klein Lankhorst R."/>
            <person name="Rose M."/>
            <person name="Hauf J."/>
            <person name="Koetter P."/>
            <person name="Berneiser S."/>
            <person name="Hempel S."/>
            <person name="Feldpausch M."/>
            <person name="Lamberth S."/>
            <person name="Van den Daele H."/>
            <person name="De Keyser A."/>
            <person name="Buysshaert C."/>
            <person name="Gielen J."/>
            <person name="Villarroel R."/>
            <person name="De Clercq R."/>
            <person name="van Montagu M."/>
            <person name="Rogers J."/>
            <person name="Cronin A."/>
            <person name="Quail M.A."/>
            <person name="Bray-Allen S."/>
            <person name="Clark L."/>
            <person name="Doggett J."/>
            <person name="Hall S."/>
            <person name="Kay M."/>
            <person name="Lennard N."/>
            <person name="McLay K."/>
            <person name="Mayes R."/>
            <person name="Pettett A."/>
            <person name="Rajandream M.A."/>
            <person name="Lyne M."/>
            <person name="Benes V."/>
            <person name="Rechmann S."/>
            <person name="Borkova D."/>
            <person name="Bloecker H."/>
            <person name="Scharfe M."/>
            <person name="Grimm M."/>
            <person name="Loehnert T.-H."/>
            <person name="Dose S."/>
            <person name="de Haan M."/>
            <person name="Maarse A.C."/>
            <person name="Schaefer M."/>
            <person name="Mueller-Auer S."/>
            <person name="Gabel C."/>
            <person name="Fuchs M."/>
            <person name="Fartmann B."/>
            <person name="Granderath K."/>
            <person name="Dauner D."/>
            <person name="Herzl A."/>
            <person name="Neumann S."/>
            <person name="Argiriou A."/>
            <person name="Vitale D."/>
            <person name="Liguori R."/>
            <person name="Piravandi E."/>
            <person name="Massenet O."/>
            <person name="Quigley F."/>
            <person name="Clabauld G."/>
            <person name="Muendlein A."/>
            <person name="Felber R."/>
            <person name="Schnabl S."/>
            <person name="Hiller R."/>
            <person name="Schmidt W."/>
            <person name="Lecharny A."/>
            <person name="Aubourg S."/>
            <person name="Chefdor F."/>
            <person name="Cooke R."/>
            <person name="Berger C."/>
            <person name="Monfort A."/>
            <person name="Casacuberta E."/>
            <person name="Gibbons T."/>
            <person name="Weber N."/>
            <person name="Vandenbol M."/>
            <person name="Bargues M."/>
            <person name="Terol J."/>
            <person name="Torres A."/>
            <person name="Perez-Perez A."/>
            <person name="Purnelle B."/>
            <person name="Bent E."/>
            <person name="Johnson S."/>
            <person name="Tacon D."/>
            <person name="Jesse T."/>
            <person name="Heijnen L."/>
            <person name="Schwarz S."/>
            <person name="Scholler P."/>
            <person name="Heber S."/>
            <person name="Francs P."/>
            <person name="Bielke C."/>
            <person name="Frishman D."/>
            <person name="Haase D."/>
            <person name="Lemcke K."/>
            <person name="Mewes H.-W."/>
            <person name="Stocker S."/>
            <person name="Zaccaria P."/>
            <person name="Bevan M."/>
            <person name="Wilson R.K."/>
            <person name="de la Bastide M."/>
            <person name="Habermann K."/>
            <person name="Parnell L."/>
            <person name="Dedhia N."/>
            <person name="Gnoj L."/>
            <person name="Schutz K."/>
            <person name="Huang E."/>
            <person name="Spiegel L."/>
            <person name="Sekhon M."/>
            <person name="Murray J."/>
            <person name="Sheet P."/>
            <person name="Cordes M."/>
            <person name="Abu-Threideh J."/>
            <person name="Stoneking T."/>
            <person name="Kalicki J."/>
            <person name="Graves T."/>
            <person name="Harmon G."/>
            <person name="Edwards J."/>
            <person name="Latreille P."/>
            <person name="Courtney L."/>
            <person name="Cloud J."/>
            <person name="Abbott A."/>
            <person name="Scott K."/>
            <person name="Johnson D."/>
            <person name="Minx P."/>
            <person name="Bentley D."/>
            <person name="Fulton B."/>
            <person name="Miller N."/>
            <person name="Greco T."/>
            <person name="Kemp K."/>
            <person name="Kramer J."/>
            <person name="Fulton L."/>
            <person name="Mardis E."/>
            <person name="Dante M."/>
            <person name="Pepin K."/>
            <person name="Hillier L.W."/>
            <person name="Nelson J."/>
            <person name="Spieth J."/>
            <person name="Ryan E."/>
            <person name="Andrews S."/>
            <person name="Geisel C."/>
            <person name="Layman D."/>
            <person name="Du H."/>
            <person name="Ali J."/>
            <person name="Berghoff A."/>
            <person name="Jones K."/>
            <person name="Drone K."/>
            <person name="Cotton M."/>
            <person name="Joshu C."/>
            <person name="Antonoiu B."/>
            <person name="Zidanic M."/>
            <person name="Strong C."/>
            <person name="Sun H."/>
            <person name="Lamar B."/>
            <person name="Yordan C."/>
            <person name="Ma P."/>
            <person name="Zhong J."/>
            <person name="Preston R."/>
            <person name="Vil D."/>
            <person name="Shekher M."/>
            <person name="Matero A."/>
            <person name="Shah R."/>
            <person name="Swaby I.K."/>
            <person name="O'Shaughnessy A."/>
            <person name="Rodriguez M."/>
            <person name="Hoffman J."/>
            <person name="Till S."/>
            <person name="Granat S."/>
            <person name="Shohdy N."/>
            <person name="Hasegawa A."/>
            <person name="Hameed A."/>
            <person name="Lodhi M."/>
            <person name="Johnson A."/>
            <person name="Chen E."/>
            <person name="Marra M.A."/>
            <person name="Martienssen R."/>
            <person name="McCombie W.R."/>
        </authorList>
    </citation>
    <scope>NUCLEOTIDE SEQUENCE [LARGE SCALE GENOMIC DNA]</scope>
    <source>
        <strain>cv. Columbia</strain>
    </source>
</reference>
<reference key="3">
    <citation type="journal article" date="2017" name="Plant J.">
        <title>Araport11: a complete reannotation of the Arabidopsis thaliana reference genome.</title>
        <authorList>
            <person name="Cheng C.Y."/>
            <person name="Krishnakumar V."/>
            <person name="Chan A.P."/>
            <person name="Thibaud-Nissen F."/>
            <person name="Schobel S."/>
            <person name="Town C.D."/>
        </authorList>
    </citation>
    <scope>GENOME REANNOTATION</scope>
    <source>
        <strain>cv. Columbia</strain>
    </source>
</reference>
<reference key="4">
    <citation type="journal article" date="2004" name="Prog. Lipid Res.">
        <title>GDSL family of serine esterases/lipases.</title>
        <authorList>
            <person name="Akoh C.C."/>
            <person name="Lee G.-C."/>
            <person name="Liaw Y.-C."/>
            <person name="Huang T.-H."/>
            <person name="Shaw J.-F."/>
        </authorList>
    </citation>
    <scope>REVIEW</scope>
</reference>
<reference key="5">
    <citation type="journal article" date="2008" name="Pak. J. Biol. Sci.">
        <title>Sequence analysis of GDSL lipase gene family in Arabidopsis thaliana.</title>
        <authorList>
            <person name="Ling H."/>
        </authorList>
    </citation>
    <scope>GENE FAMILY</scope>
</reference>
<protein>
    <recommendedName>
        <fullName>GDSL esterase/lipase At4g16230</fullName>
        <ecNumber>3.1.1.-</ecNumber>
    </recommendedName>
    <alternativeName>
        <fullName>Extracellular lipase At4g16230</fullName>
    </alternativeName>
</protein>
<gene>
    <name type="ordered locus">At4g16230</name>
    <name type="ORF">dl4155w</name>
    <name type="ORF">FCAALL.318</name>
</gene>
<dbReference type="EC" id="3.1.1.-"/>
<dbReference type="EMBL" id="Z97340">
    <property type="protein sequence ID" value="CAB10402.1"/>
    <property type="status" value="ALT_SEQ"/>
    <property type="molecule type" value="Genomic_DNA"/>
</dbReference>
<dbReference type="EMBL" id="AL161543">
    <property type="protein sequence ID" value="CAB78665.1"/>
    <property type="status" value="ALT_SEQ"/>
    <property type="molecule type" value="Genomic_DNA"/>
</dbReference>
<dbReference type="EMBL" id="CP002687">
    <property type="protein sequence ID" value="AEE83719.1"/>
    <property type="status" value="ALT_SEQ"/>
    <property type="molecule type" value="Genomic_DNA"/>
</dbReference>
<dbReference type="PIR" id="H71428">
    <property type="entry name" value="H71428"/>
</dbReference>
<dbReference type="RefSeq" id="NP_193358.4">
    <property type="nucleotide sequence ID" value="NM_117719.5"/>
</dbReference>
<dbReference type="SMR" id="O23470"/>
<dbReference type="FunCoup" id="O23470">
    <property type="interactions" value="107"/>
</dbReference>
<dbReference type="STRING" id="3702.O23470"/>
<dbReference type="GlyGen" id="O23470">
    <property type="glycosylation" value="2 sites"/>
</dbReference>
<dbReference type="PaxDb" id="3702-AT4G16230.1"/>
<dbReference type="PeptideAtlas" id="O23470"/>
<dbReference type="ProteomicsDB" id="247102"/>
<dbReference type="GeneID" id="827317"/>
<dbReference type="KEGG" id="ath:AT4G16230"/>
<dbReference type="Araport" id="AT4G16230"/>
<dbReference type="TAIR" id="AT4G16230"/>
<dbReference type="eggNOG" id="ENOG502QTUA">
    <property type="taxonomic scope" value="Eukaryota"/>
</dbReference>
<dbReference type="HOGENOM" id="CLU_015101_0_0_1"/>
<dbReference type="InParanoid" id="O23470"/>
<dbReference type="PhylomeDB" id="O23470"/>
<dbReference type="BioCyc" id="ARA:AT4G16230-MONOMER"/>
<dbReference type="PRO" id="PR:O23470"/>
<dbReference type="Proteomes" id="UP000006548">
    <property type="component" value="Chromosome 4"/>
</dbReference>
<dbReference type="ExpressionAtlas" id="O23470">
    <property type="expression patterns" value="baseline and differential"/>
</dbReference>
<dbReference type="GO" id="GO:0005576">
    <property type="term" value="C:extracellular region"/>
    <property type="evidence" value="ECO:0007669"/>
    <property type="project" value="UniProtKB-SubCell"/>
</dbReference>
<dbReference type="GO" id="GO:0016788">
    <property type="term" value="F:hydrolase activity, acting on ester bonds"/>
    <property type="evidence" value="ECO:0007669"/>
    <property type="project" value="InterPro"/>
</dbReference>
<dbReference type="GO" id="GO:0016042">
    <property type="term" value="P:lipid catabolic process"/>
    <property type="evidence" value="ECO:0007669"/>
    <property type="project" value="UniProtKB-KW"/>
</dbReference>
<dbReference type="CDD" id="cd01837">
    <property type="entry name" value="SGNH_plant_lipase_like"/>
    <property type="match status" value="1"/>
</dbReference>
<dbReference type="Gene3D" id="3.40.50.1110">
    <property type="entry name" value="SGNH hydrolase"/>
    <property type="match status" value="1"/>
</dbReference>
<dbReference type="InterPro" id="IPR001087">
    <property type="entry name" value="GDSL"/>
</dbReference>
<dbReference type="InterPro" id="IPR051238">
    <property type="entry name" value="GDSL_esterase/lipase"/>
</dbReference>
<dbReference type="InterPro" id="IPR036514">
    <property type="entry name" value="SGNH_hydro_sf"/>
</dbReference>
<dbReference type="InterPro" id="IPR035669">
    <property type="entry name" value="SGNH_plant_lipase-like"/>
</dbReference>
<dbReference type="PANTHER" id="PTHR45650">
    <property type="entry name" value="GDSL-LIKE LIPASE/ACYLHYDROLASE-RELATED"/>
    <property type="match status" value="1"/>
</dbReference>
<dbReference type="PANTHER" id="PTHR45650:SF4">
    <property type="entry name" value="GDSL-LIKE LIPASE_ACYLHYDROLASE FAMILY PROTEIN, EXPRESSED"/>
    <property type="match status" value="1"/>
</dbReference>
<dbReference type="Pfam" id="PF00657">
    <property type="entry name" value="Lipase_GDSL"/>
    <property type="match status" value="1"/>
</dbReference>
<dbReference type="SUPFAM" id="SSF52266">
    <property type="entry name" value="SGNH hydrolase"/>
    <property type="match status" value="1"/>
</dbReference>
<comment type="subcellular location">
    <subcellularLocation>
        <location evidence="3">Secreted</location>
    </subcellularLocation>
</comment>
<comment type="similarity">
    <text evidence="3">Belongs to the 'GDSL' lipolytic enzyme family.</text>
</comment>
<comment type="sequence caution" evidence="3">
    <conflict type="erroneous gene model prediction">
        <sequence resource="EMBL-CDS" id="AEE83719"/>
    </conflict>
</comment>
<comment type="sequence caution" evidence="3">
    <conflict type="erroneous gene model prediction">
        <sequence resource="EMBL-CDS" id="CAB10402"/>
    </conflict>
</comment>
<comment type="sequence caution" evidence="3">
    <conflict type="frameshift">
        <sequence resource="EMBL-CDS" id="CAB10402"/>
    </conflict>
</comment>
<comment type="sequence caution" evidence="3">
    <conflict type="erroneous gene model prediction">
        <sequence resource="EMBL-CDS" id="CAB78665"/>
    </conflict>
</comment>
<comment type="sequence caution" evidence="3">
    <conflict type="frameshift">
        <sequence resource="EMBL-CDS" id="CAB78665"/>
    </conflict>
</comment>
<feature type="signal peptide" evidence="2">
    <location>
        <begin position="1"/>
        <end position="24"/>
    </location>
</feature>
<feature type="chain" id="PRO_0000367405" description="GDSL esterase/lipase At4g16230">
    <location>
        <begin position="25"/>
        <end position="368"/>
    </location>
</feature>
<feature type="active site" description="Nucleophile" evidence="1">
    <location>
        <position position="37"/>
    </location>
</feature>
<feature type="active site" evidence="1">
    <location>
        <position position="329"/>
    </location>
</feature>
<feature type="active site" evidence="1">
    <location>
        <position position="332"/>
    </location>
</feature>
<feature type="glycosylation site" description="N-linked (GlcNAc...) asparagine" evidence="2">
    <location>
        <position position="117"/>
    </location>
</feature>
<feature type="glycosylation site" description="N-linked (GlcNAc...) asparagine" evidence="2">
    <location>
        <position position="286"/>
    </location>
</feature>
<evidence type="ECO:0000250" key="1"/>
<evidence type="ECO:0000255" key="2"/>
<evidence type="ECO:0000305" key="3"/>
<accession>O23470</accession>
<accession>F4JLR0</accession>
<proteinExistence type="inferred from homology"/>